<proteinExistence type="evidence at transcript level"/>
<name>SCAM4_ORYSJ</name>
<protein>
    <recommendedName>
        <fullName>Secretory carrier-associated membrane protein 4</fullName>
        <shortName>Secretory carrier membrane protein 4</shortName>
    </recommendedName>
</protein>
<feature type="chain" id="PRO_0000304909" description="Secretory carrier-associated membrane protein 4">
    <location>
        <begin position="1"/>
        <end position="313"/>
    </location>
</feature>
<feature type="topological domain" description="Cytoplasmic" evidence="2">
    <location>
        <begin position="1"/>
        <end position="148"/>
    </location>
</feature>
<feature type="transmembrane region" description="Helical" evidence="2">
    <location>
        <begin position="149"/>
        <end position="169"/>
    </location>
</feature>
<feature type="transmembrane region" description="Helical" evidence="2">
    <location>
        <begin position="181"/>
        <end position="201"/>
    </location>
</feature>
<feature type="transmembrane region" description="Helical" evidence="2">
    <location>
        <begin position="216"/>
        <end position="236"/>
    </location>
</feature>
<feature type="transmembrane region" description="Helical" evidence="2">
    <location>
        <begin position="255"/>
        <end position="275"/>
    </location>
</feature>
<feature type="topological domain" description="Cytoplasmic" evidence="2">
    <location>
        <begin position="276"/>
        <end position="313"/>
    </location>
</feature>
<feature type="region of interest" description="Disordered" evidence="3">
    <location>
        <begin position="1"/>
        <end position="69"/>
    </location>
</feature>
<feature type="coiled-coil region" evidence="2">
    <location>
        <begin position="85"/>
        <end position="116"/>
    </location>
</feature>
<feature type="sequence conflict" description="In Ref. 6; AK099288." evidence="4" ref="6">
    <original>I</original>
    <variation>V</variation>
    <location>
        <position position="77"/>
    </location>
</feature>
<comment type="function">
    <text evidence="1">Probably involved in membrane trafficking.</text>
</comment>
<comment type="subcellular location">
    <subcellularLocation>
        <location evidence="1">Cell membrane</location>
        <topology evidence="1">Multi-pass membrane protein</topology>
    </subcellularLocation>
    <subcellularLocation>
        <location evidence="1">Cytoplasmic vesicle</location>
        <location evidence="1">Secretory vesicle membrane</location>
        <topology evidence="1">Multi-pass membrane protein</topology>
    </subcellularLocation>
</comment>
<comment type="similarity">
    <text evidence="4">Belongs to the SCAMP family.</text>
</comment>
<accession>Q75IC7</accession>
<accession>A3AJW3</accession>
<accession>B9F9F7</accession>
<gene>
    <name type="primary">SCAMP4</name>
    <name type="ordered locus">Os03g0582200</name>
    <name type="ordered locus">LOC_Os03g38590</name>
    <name type="ORF">OJ1785_A05.15</name>
    <name type="ORF">OsJ_011085</name>
    <name evidence="5" type="ORF">OsJ_11549</name>
</gene>
<keyword id="KW-1003">Cell membrane</keyword>
<keyword id="KW-0175">Coiled coil</keyword>
<keyword id="KW-0968">Cytoplasmic vesicle</keyword>
<keyword id="KW-0472">Membrane</keyword>
<keyword id="KW-1185">Reference proteome</keyword>
<keyword id="KW-0812">Transmembrane</keyword>
<keyword id="KW-1133">Transmembrane helix</keyword>
<keyword id="KW-0813">Transport</keyword>
<dbReference type="EMBL" id="AC133333">
    <property type="protein sequence ID" value="AAS07182.1"/>
    <property type="molecule type" value="Genomic_DNA"/>
</dbReference>
<dbReference type="EMBL" id="DP000009">
    <property type="protein sequence ID" value="ABF97314.1"/>
    <property type="molecule type" value="Genomic_DNA"/>
</dbReference>
<dbReference type="EMBL" id="AP008209">
    <property type="protein sequence ID" value="BAF12474.1"/>
    <property type="molecule type" value="Genomic_DNA"/>
</dbReference>
<dbReference type="EMBL" id="AP014959">
    <property type="protein sequence ID" value="BAS85066.1"/>
    <property type="molecule type" value="Genomic_DNA"/>
</dbReference>
<dbReference type="EMBL" id="CM000140">
    <property type="protein sequence ID" value="EEE59405.1"/>
    <property type="molecule type" value="Genomic_DNA"/>
</dbReference>
<dbReference type="EMBL" id="AK099288">
    <property type="status" value="NOT_ANNOTATED_CDS"/>
    <property type="molecule type" value="mRNA"/>
</dbReference>
<dbReference type="RefSeq" id="XP_015633053.1">
    <property type="nucleotide sequence ID" value="XM_015777567.1"/>
</dbReference>
<dbReference type="SMR" id="Q75IC7"/>
<dbReference type="FunCoup" id="Q75IC7">
    <property type="interactions" value="989"/>
</dbReference>
<dbReference type="PaxDb" id="39947-Q75IC7"/>
<dbReference type="EnsemblPlants" id="Os03t0582200-01">
    <property type="protein sequence ID" value="Os03t0582200-01"/>
    <property type="gene ID" value="Os03g0582200"/>
</dbReference>
<dbReference type="EnsemblPlants" id="Os03t0582200-02">
    <property type="protein sequence ID" value="Os03t0582200-02"/>
    <property type="gene ID" value="Os03g0582200"/>
</dbReference>
<dbReference type="Gramene" id="Os03t0582200-01">
    <property type="protein sequence ID" value="Os03t0582200-01"/>
    <property type="gene ID" value="Os03g0582200"/>
</dbReference>
<dbReference type="Gramene" id="Os03t0582200-02">
    <property type="protein sequence ID" value="Os03t0582200-02"/>
    <property type="gene ID" value="Os03g0582200"/>
</dbReference>
<dbReference type="KEGG" id="dosa:Os03g0582200"/>
<dbReference type="eggNOG" id="KOG3088">
    <property type="taxonomic scope" value="Eukaryota"/>
</dbReference>
<dbReference type="HOGENOM" id="CLU_066546_3_0_1"/>
<dbReference type="InParanoid" id="Q75IC7"/>
<dbReference type="OMA" id="HKNSARY"/>
<dbReference type="OrthoDB" id="242866at2759"/>
<dbReference type="Proteomes" id="UP000000763">
    <property type="component" value="Chromosome 3"/>
</dbReference>
<dbReference type="Proteomes" id="UP000007752">
    <property type="component" value="Chromosome 3"/>
</dbReference>
<dbReference type="Proteomes" id="UP000059680">
    <property type="component" value="Chromosome 3"/>
</dbReference>
<dbReference type="GO" id="GO:0005886">
    <property type="term" value="C:plasma membrane"/>
    <property type="evidence" value="ECO:0007669"/>
    <property type="project" value="UniProtKB-SubCell"/>
</dbReference>
<dbReference type="GO" id="GO:0055038">
    <property type="term" value="C:recycling endosome membrane"/>
    <property type="evidence" value="ECO:0000318"/>
    <property type="project" value="GO_Central"/>
</dbReference>
<dbReference type="GO" id="GO:0032588">
    <property type="term" value="C:trans-Golgi network membrane"/>
    <property type="evidence" value="ECO:0000318"/>
    <property type="project" value="GO_Central"/>
</dbReference>
<dbReference type="GO" id="GO:0030658">
    <property type="term" value="C:transport vesicle membrane"/>
    <property type="evidence" value="ECO:0007669"/>
    <property type="project" value="UniProtKB-SubCell"/>
</dbReference>
<dbReference type="GO" id="GO:0015031">
    <property type="term" value="P:protein transport"/>
    <property type="evidence" value="ECO:0000318"/>
    <property type="project" value="GO_Central"/>
</dbReference>
<dbReference type="InterPro" id="IPR007273">
    <property type="entry name" value="SCAMP"/>
</dbReference>
<dbReference type="PANTHER" id="PTHR10687:SF91">
    <property type="entry name" value="SECRETORY CARRIER-ASSOCIATED MEMBRANE PROTEIN 4"/>
    <property type="match status" value="1"/>
</dbReference>
<dbReference type="PANTHER" id="PTHR10687">
    <property type="entry name" value="SECRETORY CARRIER-ASSOCIATED MEMBRANE PROTEIN SCAMP"/>
    <property type="match status" value="1"/>
</dbReference>
<dbReference type="Pfam" id="PF04144">
    <property type="entry name" value="SCAMP"/>
    <property type="match status" value="1"/>
</dbReference>
<organism>
    <name type="scientific">Oryza sativa subsp. japonica</name>
    <name type="common">Rice</name>
    <dbReference type="NCBI Taxonomy" id="39947"/>
    <lineage>
        <taxon>Eukaryota</taxon>
        <taxon>Viridiplantae</taxon>
        <taxon>Streptophyta</taxon>
        <taxon>Embryophyta</taxon>
        <taxon>Tracheophyta</taxon>
        <taxon>Spermatophyta</taxon>
        <taxon>Magnoliopsida</taxon>
        <taxon>Liliopsida</taxon>
        <taxon>Poales</taxon>
        <taxon>Poaceae</taxon>
        <taxon>BOP clade</taxon>
        <taxon>Oryzoideae</taxon>
        <taxon>Oryzeae</taxon>
        <taxon>Oryzinae</taxon>
        <taxon>Oryza</taxon>
        <taxon>Oryza sativa</taxon>
    </lineage>
</organism>
<evidence type="ECO:0000250" key="1"/>
<evidence type="ECO:0000255" key="2"/>
<evidence type="ECO:0000256" key="3">
    <source>
        <dbReference type="SAM" id="MobiDB-lite"/>
    </source>
</evidence>
<evidence type="ECO:0000305" key="4"/>
<evidence type="ECO:0000312" key="5">
    <source>
        <dbReference type="EMBL" id="EEE59405.1"/>
    </source>
</evidence>
<sequence>MAGRSRYDNPFEEGGGDEVNPFADKASKGGSAGQSSYSGGAFYTTQSRPSAPPATHLSPLPPEPADFYNDFSTPVDIPMDTSKDMKTREKELLAKEAELNRREKEIKRREEAAARAGIVLEDKNWPPFFPIIHNDIGNEIPVHLQRTQYVAFASLLGLVLCLFWNIICVTAAWIKGEGPKIWFLAVIYFILGCPGAYYLWYRPLYRAMRNESALKFGWFFLFYLVHIAFCVYAAVSPSILFVGKSLTGIFPAISLIGNTVIVGVFYFLGFAMFCLESLLSMWVIQRVYLYFRGSGKEAEMKREAARSAARAAF</sequence>
<reference key="1">
    <citation type="journal article" date="2005" name="Genome Res.">
        <title>Sequence, annotation, and analysis of synteny between rice chromosome 3 and diverged grass species.</title>
        <authorList>
            <consortium name="The rice chromosome 3 sequencing consortium"/>
            <person name="Buell C.R."/>
            <person name="Yuan Q."/>
            <person name="Ouyang S."/>
            <person name="Liu J."/>
            <person name="Zhu W."/>
            <person name="Wang A."/>
            <person name="Maiti R."/>
            <person name="Haas B."/>
            <person name="Wortman J."/>
            <person name="Pertea M."/>
            <person name="Jones K.M."/>
            <person name="Kim M."/>
            <person name="Overton L."/>
            <person name="Tsitrin T."/>
            <person name="Fadrosh D."/>
            <person name="Bera J."/>
            <person name="Weaver B."/>
            <person name="Jin S."/>
            <person name="Johri S."/>
            <person name="Reardon M."/>
            <person name="Webb K."/>
            <person name="Hill J."/>
            <person name="Moffat K."/>
            <person name="Tallon L."/>
            <person name="Van Aken S."/>
            <person name="Lewis M."/>
            <person name="Utterback T."/>
            <person name="Feldblyum T."/>
            <person name="Zismann V."/>
            <person name="Iobst S."/>
            <person name="Hsiao J."/>
            <person name="de Vazeille A.R."/>
            <person name="Salzberg S.L."/>
            <person name="White O."/>
            <person name="Fraser C.M."/>
            <person name="Yu Y."/>
            <person name="Kim H."/>
            <person name="Rambo T."/>
            <person name="Currie J."/>
            <person name="Collura K."/>
            <person name="Kernodle-Thompson S."/>
            <person name="Wei F."/>
            <person name="Kudrna K."/>
            <person name="Ammiraju J.S.S."/>
            <person name="Luo M."/>
            <person name="Goicoechea J.L."/>
            <person name="Wing R.A."/>
            <person name="Henry D."/>
            <person name="Oates R."/>
            <person name="Palmer M."/>
            <person name="Pries G."/>
            <person name="Saski C."/>
            <person name="Simmons J."/>
            <person name="Soderlund C."/>
            <person name="Nelson W."/>
            <person name="de la Bastide M."/>
            <person name="Spiegel L."/>
            <person name="Nascimento L."/>
            <person name="Huang E."/>
            <person name="Preston R."/>
            <person name="Zutavern T."/>
            <person name="Palmer L."/>
            <person name="O'Shaughnessy A."/>
            <person name="Dike S."/>
            <person name="McCombie W.R."/>
            <person name="Minx P."/>
            <person name="Cordum H."/>
            <person name="Wilson R."/>
            <person name="Jin W."/>
            <person name="Lee H.R."/>
            <person name="Jiang J."/>
            <person name="Jackson S."/>
        </authorList>
    </citation>
    <scope>NUCLEOTIDE SEQUENCE [LARGE SCALE GENOMIC DNA]</scope>
    <source>
        <strain>cv. Nipponbare</strain>
    </source>
</reference>
<reference key="2">
    <citation type="journal article" date="2005" name="Nature">
        <title>The map-based sequence of the rice genome.</title>
        <authorList>
            <consortium name="International rice genome sequencing project (IRGSP)"/>
        </authorList>
    </citation>
    <scope>NUCLEOTIDE SEQUENCE [LARGE SCALE GENOMIC DNA]</scope>
    <source>
        <strain>cv. Nipponbare</strain>
    </source>
</reference>
<reference key="3">
    <citation type="journal article" date="2008" name="Nucleic Acids Res.">
        <title>The rice annotation project database (RAP-DB): 2008 update.</title>
        <authorList>
            <consortium name="The rice annotation project (RAP)"/>
        </authorList>
    </citation>
    <scope>GENOME REANNOTATION</scope>
    <source>
        <strain>cv. Nipponbare</strain>
    </source>
</reference>
<reference key="4">
    <citation type="journal article" date="2013" name="Rice">
        <title>Improvement of the Oryza sativa Nipponbare reference genome using next generation sequence and optical map data.</title>
        <authorList>
            <person name="Kawahara Y."/>
            <person name="de la Bastide M."/>
            <person name="Hamilton J.P."/>
            <person name="Kanamori H."/>
            <person name="McCombie W.R."/>
            <person name="Ouyang S."/>
            <person name="Schwartz D.C."/>
            <person name="Tanaka T."/>
            <person name="Wu J."/>
            <person name="Zhou S."/>
            <person name="Childs K.L."/>
            <person name="Davidson R.M."/>
            <person name="Lin H."/>
            <person name="Quesada-Ocampo L."/>
            <person name="Vaillancourt B."/>
            <person name="Sakai H."/>
            <person name="Lee S.S."/>
            <person name="Kim J."/>
            <person name="Numa H."/>
            <person name="Itoh T."/>
            <person name="Buell C.R."/>
            <person name="Matsumoto T."/>
        </authorList>
    </citation>
    <scope>GENOME REANNOTATION</scope>
    <source>
        <strain>cv. Nipponbare</strain>
    </source>
</reference>
<reference key="5">
    <citation type="journal article" date="2005" name="PLoS Biol.">
        <title>The genomes of Oryza sativa: a history of duplications.</title>
        <authorList>
            <person name="Yu J."/>
            <person name="Wang J."/>
            <person name="Lin W."/>
            <person name="Li S."/>
            <person name="Li H."/>
            <person name="Zhou J."/>
            <person name="Ni P."/>
            <person name="Dong W."/>
            <person name="Hu S."/>
            <person name="Zeng C."/>
            <person name="Zhang J."/>
            <person name="Zhang Y."/>
            <person name="Li R."/>
            <person name="Xu Z."/>
            <person name="Li S."/>
            <person name="Li X."/>
            <person name="Zheng H."/>
            <person name="Cong L."/>
            <person name="Lin L."/>
            <person name="Yin J."/>
            <person name="Geng J."/>
            <person name="Li G."/>
            <person name="Shi J."/>
            <person name="Liu J."/>
            <person name="Lv H."/>
            <person name="Li J."/>
            <person name="Wang J."/>
            <person name="Deng Y."/>
            <person name="Ran L."/>
            <person name="Shi X."/>
            <person name="Wang X."/>
            <person name="Wu Q."/>
            <person name="Li C."/>
            <person name="Ren X."/>
            <person name="Wang J."/>
            <person name="Wang X."/>
            <person name="Li D."/>
            <person name="Liu D."/>
            <person name="Zhang X."/>
            <person name="Ji Z."/>
            <person name="Zhao W."/>
            <person name="Sun Y."/>
            <person name="Zhang Z."/>
            <person name="Bao J."/>
            <person name="Han Y."/>
            <person name="Dong L."/>
            <person name="Ji J."/>
            <person name="Chen P."/>
            <person name="Wu S."/>
            <person name="Liu J."/>
            <person name="Xiao Y."/>
            <person name="Bu D."/>
            <person name="Tan J."/>
            <person name="Yang L."/>
            <person name="Ye C."/>
            <person name="Zhang J."/>
            <person name="Xu J."/>
            <person name="Zhou Y."/>
            <person name="Yu Y."/>
            <person name="Zhang B."/>
            <person name="Zhuang S."/>
            <person name="Wei H."/>
            <person name="Liu B."/>
            <person name="Lei M."/>
            <person name="Yu H."/>
            <person name="Li Y."/>
            <person name="Xu H."/>
            <person name="Wei S."/>
            <person name="He X."/>
            <person name="Fang L."/>
            <person name="Zhang Z."/>
            <person name="Zhang Y."/>
            <person name="Huang X."/>
            <person name="Su Z."/>
            <person name="Tong W."/>
            <person name="Li J."/>
            <person name="Tong Z."/>
            <person name="Li S."/>
            <person name="Ye J."/>
            <person name="Wang L."/>
            <person name="Fang L."/>
            <person name="Lei T."/>
            <person name="Chen C.-S."/>
            <person name="Chen H.-C."/>
            <person name="Xu Z."/>
            <person name="Li H."/>
            <person name="Huang H."/>
            <person name="Zhang F."/>
            <person name="Xu H."/>
            <person name="Li N."/>
            <person name="Zhao C."/>
            <person name="Li S."/>
            <person name="Dong L."/>
            <person name="Huang Y."/>
            <person name="Li L."/>
            <person name="Xi Y."/>
            <person name="Qi Q."/>
            <person name="Li W."/>
            <person name="Zhang B."/>
            <person name="Hu W."/>
            <person name="Zhang Y."/>
            <person name="Tian X."/>
            <person name="Jiao Y."/>
            <person name="Liang X."/>
            <person name="Jin J."/>
            <person name="Gao L."/>
            <person name="Zheng W."/>
            <person name="Hao B."/>
            <person name="Liu S.-M."/>
            <person name="Wang W."/>
            <person name="Yuan L."/>
            <person name="Cao M."/>
            <person name="McDermott J."/>
            <person name="Samudrala R."/>
            <person name="Wang J."/>
            <person name="Wong G.K.-S."/>
            <person name="Yang H."/>
        </authorList>
    </citation>
    <scope>NUCLEOTIDE SEQUENCE [LARGE SCALE GENOMIC DNA]</scope>
    <source>
        <strain>cv. Nipponbare</strain>
    </source>
</reference>
<reference key="6">
    <citation type="journal article" date="2003" name="Science">
        <title>Collection, mapping, and annotation of over 28,000 cDNA clones from japonica rice.</title>
        <authorList>
            <consortium name="The rice full-length cDNA consortium"/>
        </authorList>
    </citation>
    <scope>NUCLEOTIDE SEQUENCE [LARGE SCALE MRNA]</scope>
    <source>
        <strain>cv. Nipponbare</strain>
    </source>
</reference>